<name>CYSH_BACAH</name>
<keyword id="KW-0963">Cytoplasm</keyword>
<keyword id="KW-0408">Iron</keyword>
<keyword id="KW-0411">Iron-sulfur</keyword>
<keyword id="KW-0479">Metal-binding</keyword>
<keyword id="KW-0560">Oxidoreductase</keyword>
<organism>
    <name type="scientific">Bacillus thuringiensis (strain Al Hakam)</name>
    <dbReference type="NCBI Taxonomy" id="412694"/>
    <lineage>
        <taxon>Bacteria</taxon>
        <taxon>Bacillati</taxon>
        <taxon>Bacillota</taxon>
        <taxon>Bacilli</taxon>
        <taxon>Bacillales</taxon>
        <taxon>Bacillaceae</taxon>
        <taxon>Bacillus</taxon>
        <taxon>Bacillus cereus group</taxon>
    </lineage>
</organism>
<comment type="function">
    <text evidence="1">Catalyzes the formation of sulfite from adenosine 5'-phosphosulfate (APS) using thioredoxin as an electron donor.</text>
</comment>
<comment type="catalytic activity">
    <reaction evidence="1">
        <text>[thioredoxin]-disulfide + sulfite + AMP + 2 H(+) = adenosine 5'-phosphosulfate + [thioredoxin]-dithiol</text>
        <dbReference type="Rhea" id="RHEA:21976"/>
        <dbReference type="Rhea" id="RHEA-COMP:10698"/>
        <dbReference type="Rhea" id="RHEA-COMP:10700"/>
        <dbReference type="ChEBI" id="CHEBI:15378"/>
        <dbReference type="ChEBI" id="CHEBI:17359"/>
        <dbReference type="ChEBI" id="CHEBI:29950"/>
        <dbReference type="ChEBI" id="CHEBI:50058"/>
        <dbReference type="ChEBI" id="CHEBI:58243"/>
        <dbReference type="ChEBI" id="CHEBI:456215"/>
        <dbReference type="EC" id="1.8.4.10"/>
    </reaction>
</comment>
<comment type="cofactor">
    <cofactor evidence="1">
        <name>[4Fe-4S] cluster</name>
        <dbReference type="ChEBI" id="CHEBI:49883"/>
    </cofactor>
    <text evidence="1">Binds 1 [4Fe-4S] cluster per subunit.</text>
</comment>
<comment type="pathway">
    <text evidence="1">Sulfur metabolism; hydrogen sulfide biosynthesis; sulfite from sulfate.</text>
</comment>
<comment type="subcellular location">
    <subcellularLocation>
        <location evidence="1">Cytoplasm</location>
    </subcellularLocation>
</comment>
<comment type="similarity">
    <text evidence="1">Belongs to the PAPS reductase family. CysH subfamily.</text>
</comment>
<sequence length="234" mass="27320">MLTYETWEENDVSFSEEDETKGALSVLSWAYKEYKSEIVYACSFGVEGMVLLHLINQVNPSAKVVFLDTNVHFQETYELIQKVRERFPSLNIIEKQPKLTLDEQDKLHGDKLWESNPNLCCKIRKILPLEESLANEKAWISGLRREQSETRKHTKFINQDHRFQSIKVCPLIHWTWKEVWRYVYKHSLPYNPLHDVGYPSIGCEKCTLPVGEGGDSRDGRWAGKVKTECGLHYQ</sequence>
<proteinExistence type="inferred from homology"/>
<protein>
    <recommendedName>
        <fullName evidence="1">Adenosine 5'-phosphosulfate reductase</fullName>
        <shortName evidence="1">APS reductase</shortName>
        <ecNumber evidence="1">1.8.4.10</ecNumber>
    </recommendedName>
    <alternativeName>
        <fullName evidence="1">5'-adenylylsulfate reductase</fullName>
    </alternativeName>
    <alternativeName>
        <fullName evidence="1">Thioredoxin-dependent 5'-adenylylsulfate reductase</fullName>
    </alternativeName>
</protein>
<dbReference type="EC" id="1.8.4.10" evidence="1"/>
<dbReference type="EMBL" id="CP000485">
    <property type="protein sequence ID" value="ABK84625.1"/>
    <property type="molecule type" value="Genomic_DNA"/>
</dbReference>
<dbReference type="RefSeq" id="WP_000958993.1">
    <property type="nucleotide sequence ID" value="NC_008600.1"/>
</dbReference>
<dbReference type="SMR" id="A0RBN2"/>
<dbReference type="KEGG" id="btl:BALH_1276"/>
<dbReference type="HOGENOM" id="CLU_044089_2_1_9"/>
<dbReference type="GO" id="GO:0005737">
    <property type="term" value="C:cytoplasm"/>
    <property type="evidence" value="ECO:0007669"/>
    <property type="project" value="UniProtKB-SubCell"/>
</dbReference>
<dbReference type="GO" id="GO:0051539">
    <property type="term" value="F:4 iron, 4 sulfur cluster binding"/>
    <property type="evidence" value="ECO:0007669"/>
    <property type="project" value="UniProtKB-UniRule"/>
</dbReference>
<dbReference type="GO" id="GO:0043866">
    <property type="term" value="F:adenylyl-sulfate reductase (thioredoxin) activity"/>
    <property type="evidence" value="ECO:0007669"/>
    <property type="project" value="UniProtKB-EC"/>
</dbReference>
<dbReference type="GO" id="GO:0046872">
    <property type="term" value="F:metal ion binding"/>
    <property type="evidence" value="ECO:0007669"/>
    <property type="project" value="UniProtKB-KW"/>
</dbReference>
<dbReference type="GO" id="GO:0004604">
    <property type="term" value="F:phosphoadenylyl-sulfate reductase (thioredoxin) activity"/>
    <property type="evidence" value="ECO:0007669"/>
    <property type="project" value="UniProtKB-UniRule"/>
</dbReference>
<dbReference type="GO" id="GO:0019344">
    <property type="term" value="P:cysteine biosynthetic process"/>
    <property type="evidence" value="ECO:0007669"/>
    <property type="project" value="InterPro"/>
</dbReference>
<dbReference type="GO" id="GO:0070814">
    <property type="term" value="P:hydrogen sulfide biosynthetic process"/>
    <property type="evidence" value="ECO:0007669"/>
    <property type="project" value="UniProtKB-UniRule"/>
</dbReference>
<dbReference type="GO" id="GO:0019379">
    <property type="term" value="P:sulfate assimilation, phosphoadenylyl sulfate reduction by phosphoadenylyl-sulfate reductase (thioredoxin)"/>
    <property type="evidence" value="ECO:0007669"/>
    <property type="project" value="UniProtKB-UniRule"/>
</dbReference>
<dbReference type="CDD" id="cd23945">
    <property type="entry name" value="PAPS_reductase"/>
    <property type="match status" value="1"/>
</dbReference>
<dbReference type="FunFam" id="3.40.50.620:FF:000095">
    <property type="entry name" value="Phosphoadenosine phosphosulfate reductase"/>
    <property type="match status" value="1"/>
</dbReference>
<dbReference type="Gene3D" id="3.40.50.620">
    <property type="entry name" value="HUPs"/>
    <property type="match status" value="1"/>
</dbReference>
<dbReference type="HAMAP" id="MF_00063">
    <property type="entry name" value="CysH"/>
    <property type="match status" value="1"/>
</dbReference>
<dbReference type="InterPro" id="IPR011798">
    <property type="entry name" value="APS_reductase"/>
</dbReference>
<dbReference type="InterPro" id="IPR004511">
    <property type="entry name" value="PAPS/APS_Rdtase"/>
</dbReference>
<dbReference type="InterPro" id="IPR002500">
    <property type="entry name" value="PAPS_reduct_dom"/>
</dbReference>
<dbReference type="InterPro" id="IPR014729">
    <property type="entry name" value="Rossmann-like_a/b/a_fold"/>
</dbReference>
<dbReference type="NCBIfam" id="TIGR02055">
    <property type="entry name" value="APS_reductase"/>
    <property type="match status" value="1"/>
</dbReference>
<dbReference type="NCBIfam" id="TIGR00434">
    <property type="entry name" value="cysH"/>
    <property type="match status" value="1"/>
</dbReference>
<dbReference type="NCBIfam" id="NF002537">
    <property type="entry name" value="PRK02090.1"/>
    <property type="match status" value="1"/>
</dbReference>
<dbReference type="PANTHER" id="PTHR46509">
    <property type="entry name" value="PHOSPHOADENOSINE PHOSPHOSULFATE REDUCTASE"/>
    <property type="match status" value="1"/>
</dbReference>
<dbReference type="PANTHER" id="PTHR46509:SF1">
    <property type="entry name" value="PHOSPHOADENOSINE PHOSPHOSULFATE REDUCTASE"/>
    <property type="match status" value="1"/>
</dbReference>
<dbReference type="Pfam" id="PF01507">
    <property type="entry name" value="PAPS_reduct"/>
    <property type="match status" value="1"/>
</dbReference>
<dbReference type="PIRSF" id="PIRSF000857">
    <property type="entry name" value="PAPS_reductase"/>
    <property type="match status" value="1"/>
</dbReference>
<dbReference type="SUPFAM" id="SSF52402">
    <property type="entry name" value="Adenine nucleotide alpha hydrolases-like"/>
    <property type="match status" value="1"/>
</dbReference>
<feature type="chain" id="PRO_1000008915" description="Adenosine 5'-phosphosulfate reductase">
    <location>
        <begin position="1"/>
        <end position="234"/>
    </location>
</feature>
<feature type="active site" description="Nucleophile; cysteine thiosulfonate intermediate" evidence="1">
    <location>
        <position position="229"/>
    </location>
</feature>
<feature type="binding site" evidence="1">
    <location>
        <position position="120"/>
    </location>
    <ligand>
        <name>[4Fe-4S] cluster</name>
        <dbReference type="ChEBI" id="CHEBI:49883"/>
    </ligand>
</feature>
<feature type="binding site" evidence="1">
    <location>
        <position position="121"/>
    </location>
    <ligand>
        <name>[4Fe-4S] cluster</name>
        <dbReference type="ChEBI" id="CHEBI:49883"/>
    </ligand>
</feature>
<feature type="binding site" evidence="1">
    <location>
        <position position="203"/>
    </location>
    <ligand>
        <name>[4Fe-4S] cluster</name>
        <dbReference type="ChEBI" id="CHEBI:49883"/>
    </ligand>
</feature>
<feature type="binding site" evidence="1">
    <location>
        <position position="206"/>
    </location>
    <ligand>
        <name>[4Fe-4S] cluster</name>
        <dbReference type="ChEBI" id="CHEBI:49883"/>
    </ligand>
</feature>
<accession>A0RBN2</accession>
<reference key="1">
    <citation type="journal article" date="2007" name="J. Bacteriol.">
        <title>The complete genome sequence of Bacillus thuringiensis Al Hakam.</title>
        <authorList>
            <person name="Challacombe J.F."/>
            <person name="Altherr M.R."/>
            <person name="Xie G."/>
            <person name="Bhotika S.S."/>
            <person name="Brown N."/>
            <person name="Bruce D."/>
            <person name="Campbell C.S."/>
            <person name="Campbell M.L."/>
            <person name="Chen J."/>
            <person name="Chertkov O."/>
            <person name="Cleland C."/>
            <person name="Dimitrijevic M."/>
            <person name="Doggett N.A."/>
            <person name="Fawcett J.J."/>
            <person name="Glavina T."/>
            <person name="Goodwin L.A."/>
            <person name="Green L.D."/>
            <person name="Han C.S."/>
            <person name="Hill K.K."/>
            <person name="Hitchcock P."/>
            <person name="Jackson P.J."/>
            <person name="Keim P."/>
            <person name="Kewalramani A.R."/>
            <person name="Longmire J."/>
            <person name="Lucas S."/>
            <person name="Malfatti S."/>
            <person name="Martinez D."/>
            <person name="McMurry K."/>
            <person name="Meincke L.J."/>
            <person name="Misra M."/>
            <person name="Moseman B.L."/>
            <person name="Mundt M."/>
            <person name="Munk A.C."/>
            <person name="Okinaka R.T."/>
            <person name="Parson-Quintana B."/>
            <person name="Reilly L.P."/>
            <person name="Richardson P."/>
            <person name="Robinson D.L."/>
            <person name="Saunders E."/>
            <person name="Tapia R."/>
            <person name="Tesmer J.G."/>
            <person name="Thayer N."/>
            <person name="Thompson L.S."/>
            <person name="Tice H."/>
            <person name="Ticknor L.O."/>
            <person name="Wills P.L."/>
            <person name="Gilna P."/>
            <person name="Brettin T.S."/>
        </authorList>
    </citation>
    <scope>NUCLEOTIDE SEQUENCE [LARGE SCALE GENOMIC DNA]</scope>
    <source>
        <strain>Al Hakam</strain>
    </source>
</reference>
<gene>
    <name evidence="1" type="primary">cysH</name>
    <name type="ordered locus">BALH_1276</name>
</gene>
<evidence type="ECO:0000255" key="1">
    <source>
        <dbReference type="HAMAP-Rule" id="MF_00063"/>
    </source>
</evidence>